<name>CAS1A_MOOTA</name>
<proteinExistence type="inferred from homology"/>
<reference key="1">
    <citation type="journal article" date="2008" name="Environ. Microbiol.">
        <title>The complete genome sequence of Moorella thermoacetica (f. Clostridium thermoaceticum).</title>
        <authorList>
            <person name="Pierce E."/>
            <person name="Xie G."/>
            <person name="Barabote R.D."/>
            <person name="Saunders E."/>
            <person name="Han C.S."/>
            <person name="Detter J.C."/>
            <person name="Richardson P."/>
            <person name="Brettin T.S."/>
            <person name="Das A."/>
            <person name="Ljungdahl L.G."/>
            <person name="Ragsdale S.W."/>
        </authorList>
    </citation>
    <scope>NUCLEOTIDE SEQUENCE [LARGE SCALE GENOMIC DNA]</scope>
    <source>
        <strain>ATCC 39073 / JCM 9320</strain>
    </source>
</reference>
<dbReference type="EC" id="3.1.-.-" evidence="1"/>
<dbReference type="EMBL" id="CP000232">
    <property type="protein sequence ID" value="ABC18823.1"/>
    <property type="molecule type" value="Genomic_DNA"/>
</dbReference>
<dbReference type="RefSeq" id="YP_429366.1">
    <property type="nucleotide sequence ID" value="NC_007644.1"/>
</dbReference>
<dbReference type="SMR" id="Q2RL66"/>
<dbReference type="STRING" id="264732.Moth_0493"/>
<dbReference type="EnsemblBacteria" id="ABC18823">
    <property type="protein sequence ID" value="ABC18823"/>
    <property type="gene ID" value="Moth_0493"/>
</dbReference>
<dbReference type="KEGG" id="mta:Moth_0493"/>
<dbReference type="PATRIC" id="fig|264732.11.peg.528"/>
<dbReference type="eggNOG" id="COG1518">
    <property type="taxonomic scope" value="Bacteria"/>
</dbReference>
<dbReference type="HOGENOM" id="CLU_052779_1_0_9"/>
<dbReference type="OrthoDB" id="9803119at2"/>
<dbReference type="GO" id="GO:0003677">
    <property type="term" value="F:DNA binding"/>
    <property type="evidence" value="ECO:0007669"/>
    <property type="project" value="UniProtKB-KW"/>
</dbReference>
<dbReference type="GO" id="GO:0004520">
    <property type="term" value="F:DNA endonuclease activity"/>
    <property type="evidence" value="ECO:0007669"/>
    <property type="project" value="InterPro"/>
</dbReference>
<dbReference type="GO" id="GO:0046872">
    <property type="term" value="F:metal ion binding"/>
    <property type="evidence" value="ECO:0007669"/>
    <property type="project" value="UniProtKB-UniRule"/>
</dbReference>
<dbReference type="GO" id="GO:0051607">
    <property type="term" value="P:defense response to virus"/>
    <property type="evidence" value="ECO:0007669"/>
    <property type="project" value="UniProtKB-UniRule"/>
</dbReference>
<dbReference type="GO" id="GO:0043571">
    <property type="term" value="P:maintenance of CRISPR repeat elements"/>
    <property type="evidence" value="ECO:0007669"/>
    <property type="project" value="UniProtKB-UniRule"/>
</dbReference>
<dbReference type="CDD" id="cd09721">
    <property type="entry name" value="Cas1_I-C"/>
    <property type="match status" value="1"/>
</dbReference>
<dbReference type="Gene3D" id="1.20.120.920">
    <property type="entry name" value="CRISPR-associated endonuclease Cas1, C-terminal domain"/>
    <property type="match status" value="1"/>
</dbReference>
<dbReference type="Gene3D" id="3.100.10.20">
    <property type="entry name" value="CRISPR-associated endonuclease Cas1, N-terminal domain"/>
    <property type="match status" value="1"/>
</dbReference>
<dbReference type="HAMAP" id="MF_01470">
    <property type="entry name" value="Cas1"/>
    <property type="match status" value="1"/>
</dbReference>
<dbReference type="InterPro" id="IPR050646">
    <property type="entry name" value="Cas1"/>
</dbReference>
<dbReference type="InterPro" id="IPR002729">
    <property type="entry name" value="CRISPR-assoc_Cas1"/>
</dbReference>
<dbReference type="InterPro" id="IPR042206">
    <property type="entry name" value="CRISPR-assoc_Cas1_C"/>
</dbReference>
<dbReference type="InterPro" id="IPR019856">
    <property type="entry name" value="CRISPR-assoc_Cas1_DVULG"/>
</dbReference>
<dbReference type="InterPro" id="IPR042211">
    <property type="entry name" value="CRISPR-assoc_Cas1_N"/>
</dbReference>
<dbReference type="NCBIfam" id="TIGR00287">
    <property type="entry name" value="cas1"/>
    <property type="match status" value="1"/>
</dbReference>
<dbReference type="NCBIfam" id="TIGR03640">
    <property type="entry name" value="cas1_DVULG"/>
    <property type="match status" value="1"/>
</dbReference>
<dbReference type="PANTHER" id="PTHR34353">
    <property type="entry name" value="CRISPR-ASSOCIATED ENDONUCLEASE CAS1 1"/>
    <property type="match status" value="1"/>
</dbReference>
<dbReference type="PANTHER" id="PTHR34353:SF2">
    <property type="entry name" value="CRISPR-ASSOCIATED ENDONUCLEASE CAS1 1"/>
    <property type="match status" value="1"/>
</dbReference>
<dbReference type="Pfam" id="PF01867">
    <property type="entry name" value="Cas_Cas1"/>
    <property type="match status" value="1"/>
</dbReference>
<evidence type="ECO:0000255" key="1">
    <source>
        <dbReference type="HAMAP-Rule" id="MF_01470"/>
    </source>
</evidence>
<protein>
    <recommendedName>
        <fullName evidence="1">CRISPR-associated endonuclease Cas1 1</fullName>
        <ecNumber evidence="1">3.1.-.-</ecNumber>
    </recommendedName>
</protein>
<sequence>MHILLNTLYLMTPRTLVRLDHETVKIEVEGELKMQIPLHHLGSIVCFGDVTLTTPLIMRCAEDKRLIVFHDQHGRFKARVEGPVSGNVFLRHAQHEALSDSKKTTAIARNIVAGKIRNTRQVVLRGAREADNEDDRKALQETARELAHGLDALSRSPDLEQIRGIEGNAARHYFATLDRMVRVNREAFKITHRNRRPPLDRMNALLSYIYALLLNDCLSAAEGVGLDPQIGYLHVLRSGRPALALDLMEEFRAILADRLALTLVNRRQIDERDFVERPGGAVHINDNARKEIAIAYQKRKQEEVLHPVLNRKVPLGLVPHIQARLLARVLRGDAEEYLPFMYR</sequence>
<comment type="function">
    <text evidence="1">CRISPR (clustered regularly interspaced short palindromic repeat), is an adaptive immune system that provides protection against mobile genetic elements (viruses, transposable elements and conjugative plasmids). CRISPR clusters contain spacers, sequences complementary to antecedent mobile elements, and target invading nucleic acids. CRISPR clusters are transcribed and processed into CRISPR RNA (crRNA). Acts as a dsDNA endonuclease. Involved in the integration of spacer DNA into the CRISPR cassette.</text>
</comment>
<comment type="cofactor">
    <cofactor evidence="1">
        <name>Mg(2+)</name>
        <dbReference type="ChEBI" id="CHEBI:18420"/>
    </cofactor>
    <cofactor evidence="1">
        <name>Mn(2+)</name>
        <dbReference type="ChEBI" id="CHEBI:29035"/>
    </cofactor>
</comment>
<comment type="subunit">
    <text evidence="1">Homodimer, forms a heterotetramer with a Cas2 homodimer.</text>
</comment>
<comment type="similarity">
    <text evidence="1">Belongs to the CRISPR-associated endonuclease Cas1 family.</text>
</comment>
<feature type="chain" id="PRO_0000417080" description="CRISPR-associated endonuclease Cas1 1">
    <location>
        <begin position="1"/>
        <end position="343"/>
    </location>
</feature>
<feature type="binding site" evidence="1">
    <location>
        <position position="166"/>
    </location>
    <ligand>
        <name>Mn(2+)</name>
        <dbReference type="ChEBI" id="CHEBI:29035"/>
    </ligand>
</feature>
<feature type="binding site" evidence="1">
    <location>
        <position position="234"/>
    </location>
    <ligand>
        <name>Mn(2+)</name>
        <dbReference type="ChEBI" id="CHEBI:29035"/>
    </ligand>
</feature>
<feature type="binding site" evidence="1">
    <location>
        <position position="249"/>
    </location>
    <ligand>
        <name>Mn(2+)</name>
        <dbReference type="ChEBI" id="CHEBI:29035"/>
    </ligand>
</feature>
<accession>Q2RL66</accession>
<keyword id="KW-0051">Antiviral defense</keyword>
<keyword id="KW-0238">DNA-binding</keyword>
<keyword id="KW-0255">Endonuclease</keyword>
<keyword id="KW-0378">Hydrolase</keyword>
<keyword id="KW-0460">Magnesium</keyword>
<keyword id="KW-0464">Manganese</keyword>
<keyword id="KW-0479">Metal-binding</keyword>
<keyword id="KW-0540">Nuclease</keyword>
<gene>
    <name evidence="1" type="primary">cas1-1</name>
    <name type="ordered locus">Moth_0493</name>
</gene>
<organism>
    <name type="scientific">Moorella thermoacetica (strain ATCC 39073 / JCM 9320)</name>
    <dbReference type="NCBI Taxonomy" id="264732"/>
    <lineage>
        <taxon>Bacteria</taxon>
        <taxon>Bacillati</taxon>
        <taxon>Bacillota</taxon>
        <taxon>Clostridia</taxon>
        <taxon>Moorellales</taxon>
        <taxon>Moorellaceae</taxon>
        <taxon>Moorella</taxon>
    </lineage>
</organism>